<gene>
    <name evidence="3" type="primary">esxB</name>
    <name type="ordered locus">DIP0558</name>
</gene>
<evidence type="ECO:0000256" key="1">
    <source>
        <dbReference type="SAM" id="MobiDB-lite"/>
    </source>
</evidence>
<evidence type="ECO:0000269" key="2">
    <source>
    </source>
</evidence>
<evidence type="ECO:0000303" key="3">
    <source>
    </source>
</evidence>
<evidence type="ECO:0000305" key="4"/>
<comment type="subunit">
    <text evidence="2">Forms a tight 1:1 complex with EsxB.</text>
</comment>
<comment type="miscellaneous">
    <text evidence="2">To improve expression in E.coli the proteins were cloned as a single protein in the order esxB-esxA with a cleavable thrombin tag (PubMed:19854905).</text>
</comment>
<comment type="similarity">
    <text evidence="4">Belongs to the WXG100 family. CFP-10 subfamily.</text>
</comment>
<name>ESXB_CORDI</name>
<keyword id="KW-1185">Reference proteome</keyword>
<feature type="chain" id="PRO_0000437937" description="ESAT-6-like protein EsxB">
    <location>
        <begin position="1"/>
        <end position="105"/>
    </location>
</feature>
<feature type="region of interest" description="Disordered" evidence="1">
    <location>
        <begin position="1"/>
        <end position="23"/>
    </location>
</feature>
<feature type="compositionally biased region" description="Basic and acidic residues" evidence="1">
    <location>
        <begin position="7"/>
        <end position="21"/>
    </location>
</feature>
<reference key="1">
    <citation type="journal article" date="2003" name="Nucleic Acids Res.">
        <title>The complete genome sequence and analysis of Corynebacterium diphtheriae NCTC13129.</title>
        <authorList>
            <person name="Cerdeno-Tarraga A.-M."/>
            <person name="Efstratiou A."/>
            <person name="Dover L.G."/>
            <person name="Holden M.T.G."/>
            <person name="Pallen M.J."/>
            <person name="Bentley S.D."/>
            <person name="Besra G.S."/>
            <person name="Churcher C.M."/>
            <person name="James K.D."/>
            <person name="De Zoysa A."/>
            <person name="Chillingworth T."/>
            <person name="Cronin A."/>
            <person name="Dowd L."/>
            <person name="Feltwell T."/>
            <person name="Hamlin N."/>
            <person name="Holroyd S."/>
            <person name="Jagels K."/>
            <person name="Moule S."/>
            <person name="Quail M.A."/>
            <person name="Rabbinowitsch E."/>
            <person name="Rutherford K.M."/>
            <person name="Thomson N.R."/>
            <person name="Unwin L."/>
            <person name="Whitehead S."/>
            <person name="Barrell B.G."/>
            <person name="Parkhill J."/>
        </authorList>
    </citation>
    <scope>NUCLEOTIDE SEQUENCE [LARGE SCALE GENOMIC DNA]</scope>
    <source>
        <strain>ATCC 700971 / NCTC 13129 / Biotype gravis</strain>
    </source>
</reference>
<reference key="2">
    <citation type="journal article" date="2010" name="J. Bacteriol.">
        <title>Conservation of structure and protein-protein interactions mediated by the secreted mycobacterial proteins EsxA, EsxB, and EspA.</title>
        <authorList>
            <person name="Callahan B."/>
            <person name="Nguyen K."/>
            <person name="Collins A."/>
            <person name="Valdes K."/>
            <person name="Caplow M."/>
            <person name="Crossman D.K."/>
            <person name="Steyn A.J."/>
            <person name="Eisele L."/>
            <person name="Derbyshire K.M."/>
        </authorList>
    </citation>
    <scope>SUBUNIT</scope>
    <source>
        <strain>ATCC 700971 / NCTC 13129 / Biotype gravis</strain>
    </source>
</reference>
<accession>Q6NJ55</accession>
<proteinExistence type="evidence at protein level"/>
<dbReference type="EMBL" id="BX248355">
    <property type="protein sequence ID" value="CAE49070.1"/>
    <property type="molecule type" value="Genomic_DNA"/>
</dbReference>
<dbReference type="RefSeq" id="WP_010934381.1">
    <property type="nucleotide sequence ID" value="NC_002935.2"/>
</dbReference>
<dbReference type="SMR" id="Q6NJ55"/>
<dbReference type="STRING" id="257309.DIP0558"/>
<dbReference type="KEGG" id="cdi:DIP0558"/>
<dbReference type="HOGENOM" id="CLU_151185_2_1_11"/>
<dbReference type="Proteomes" id="UP000002198">
    <property type="component" value="Chromosome"/>
</dbReference>
<dbReference type="Gene3D" id="1.10.287.1060">
    <property type="entry name" value="ESAT-6-like"/>
    <property type="match status" value="1"/>
</dbReference>
<dbReference type="InterPro" id="IPR036689">
    <property type="entry name" value="ESAT-6-like_sf"/>
</dbReference>
<dbReference type="InterPro" id="IPR010310">
    <property type="entry name" value="T7SS_ESAT-6-like"/>
</dbReference>
<dbReference type="NCBIfam" id="TIGR03930">
    <property type="entry name" value="WXG100_ESAT6"/>
    <property type="match status" value="1"/>
</dbReference>
<dbReference type="Pfam" id="PF06013">
    <property type="entry name" value="WXG100"/>
    <property type="match status" value="1"/>
</dbReference>
<dbReference type="SUPFAM" id="SSF140453">
    <property type="entry name" value="EsxAB dimer-like"/>
    <property type="match status" value="1"/>
</dbReference>
<sequence>MSQGFKTEADVMRNTAHRVDDTNQEVSAELSRLRSIVDGVRASWEGTAQVSFDNLMQRWDASAKGLQDALQSISDNIRGNATSFENVEADNQSAFSAVGGQGLAL</sequence>
<organism>
    <name type="scientific">Corynebacterium diphtheriae (strain ATCC 700971 / NCTC 13129 / Biotype gravis)</name>
    <dbReference type="NCBI Taxonomy" id="257309"/>
    <lineage>
        <taxon>Bacteria</taxon>
        <taxon>Bacillati</taxon>
        <taxon>Actinomycetota</taxon>
        <taxon>Actinomycetes</taxon>
        <taxon>Mycobacteriales</taxon>
        <taxon>Corynebacteriaceae</taxon>
        <taxon>Corynebacterium</taxon>
    </lineage>
</organism>
<protein>
    <recommendedName>
        <fullName evidence="3">ESAT-6-like protein EsxB</fullName>
    </recommendedName>
</protein>